<accession>P36788</accession>
<gene>
    <name evidence="1" type="primary">E2</name>
</gene>
<sequence>MENLCQRLNACQEKILDYYELDSNKLTDQIDYWKLVRYECAIFYKAREGNMQCINHQVVPSTVVCKQKAWQAIEIHIALQSLINTDYNTEAWTMRDTSYEMYMTEPKHCFKKEGTTVTVVFDCNKENTMDYIRWKYVYYKTDIGWCKGTGDVDAKGIYYTQGAYKQYYVDFKQEAEKYGTGVQWAVHVCGQVICCPEFVSSTCSSNQISTAKTAEPVSNATTQTTEAYVPVGTKETEAPYPGKRRRLSGPDTTVTTVTTVTTAATQPGQSVDYTNNNLHSTSGGHHPGRDTSSDQTVFIVHLKGDTNSLKCLRYRFKKHKGLYCNVSSTWHWTSNDTNQQGIVTITFNSITQRNNFLTTVKIPQSITSTLGIMSL</sequence>
<name>VE2_HPV26</name>
<comment type="function">
    <text evidence="1">Plays a role in the initiation of viral DNA replication. A dimer of E2 interacts with a dimer of E1 in order to improve specificity of E1 DNA binding activity. Once the complex recognizes and binds DNA at specific sites, the E2 dimer is removed from DNA. E2 also regulates viral transcription through binding to the E2RE response element (5'-ACCNNNNNNGGT-3') present in multiple copies in the regulatory regions of the viral genome. Activates or represses transcription depending on E2RE's position with regards to proximal promoter elements including the TATA-box. Repression occurs by sterically hindering the assembly of the transcription initiation complex.</text>
</comment>
<comment type="subunit">
    <text evidence="1">Binds DNA as homodimer. Interacts with protein E1; this interaction greatly increases E1 DNA-binding activity. Interacts with protein L1; this interaction enhances E2-dependent replication and transcription activation. Interacts with protein L2; this interaction inhibits E2 transcriptional activity but not DNA replication function E2. Interacts with protein E7; this interaction inhibits E7 oncogenic activity. Interacts with host TAF1; this interaction modulates E2-dependent transcriptional regulation. Interacts with host BRD4; this interaction mediates E2 transcriptional activation function. Additionally, the interaction with host BRD4 on mitotic chromosomes mediates tethering of the viral genome. Interacts with host TOPBP1; this interaction is required for optimal viral DNA replication.</text>
</comment>
<comment type="subcellular location">
    <subcellularLocation>
        <location evidence="1">Host nucleus</location>
    </subcellularLocation>
</comment>
<comment type="PTM">
    <text evidence="1">Phosphorylated.</text>
</comment>
<comment type="PTM">
    <text evidence="1">Sumoylation plays a regulatory role in E2 transcriptional activity.</text>
</comment>
<comment type="similarity">
    <text evidence="1">Belongs to the papillomaviridae E2 protein family.</text>
</comment>
<protein>
    <recommendedName>
        <fullName evidence="1">Regulatory protein E2</fullName>
    </recommendedName>
</protein>
<evidence type="ECO:0000255" key="1">
    <source>
        <dbReference type="HAMAP-Rule" id="MF_04001"/>
    </source>
</evidence>
<evidence type="ECO:0000256" key="2">
    <source>
        <dbReference type="SAM" id="MobiDB-lite"/>
    </source>
</evidence>
<reference key="1">
    <citation type="journal article" date="1994" name="Curr. Top. Microbiol. Immunol.">
        <title>Primer-directed sequencing of human papillomavirus types.</title>
        <authorList>
            <person name="Delius H."/>
            <person name="Hofmann B."/>
        </authorList>
    </citation>
    <scope>NUCLEOTIDE SEQUENCE [GENOMIC DNA]</scope>
</reference>
<dbReference type="EMBL" id="X74472">
    <property type="protein sequence ID" value="CAA52533.1"/>
    <property type="molecule type" value="Genomic_DNA"/>
</dbReference>
<dbReference type="PIR" id="S36547">
    <property type="entry name" value="S36547"/>
</dbReference>
<dbReference type="RefSeq" id="NP_041785.1">
    <property type="nucleotide sequence ID" value="NC_001583.1"/>
</dbReference>
<dbReference type="SMR" id="P36788"/>
<dbReference type="GeneID" id="1496945"/>
<dbReference type="KEGG" id="vg:1496945"/>
<dbReference type="OrthoDB" id="15886at10239"/>
<dbReference type="Proteomes" id="UP000009113">
    <property type="component" value="Genome"/>
</dbReference>
<dbReference type="GO" id="GO:0042025">
    <property type="term" value="C:host cell nucleus"/>
    <property type="evidence" value="ECO:0007669"/>
    <property type="project" value="UniProtKB-SubCell"/>
</dbReference>
<dbReference type="GO" id="GO:0003677">
    <property type="term" value="F:DNA binding"/>
    <property type="evidence" value="ECO:0007669"/>
    <property type="project" value="UniProtKB-UniRule"/>
</dbReference>
<dbReference type="GO" id="GO:0003700">
    <property type="term" value="F:DNA-binding transcription factor activity"/>
    <property type="evidence" value="ECO:0007669"/>
    <property type="project" value="UniProtKB-UniRule"/>
</dbReference>
<dbReference type="GO" id="GO:0000166">
    <property type="term" value="F:nucleotide binding"/>
    <property type="evidence" value="ECO:0007669"/>
    <property type="project" value="UniProtKB-UniRule"/>
</dbReference>
<dbReference type="GO" id="GO:0006260">
    <property type="term" value="P:DNA replication"/>
    <property type="evidence" value="ECO:0007669"/>
    <property type="project" value="UniProtKB-KW"/>
</dbReference>
<dbReference type="GO" id="GO:0006351">
    <property type="term" value="P:DNA-templated transcription"/>
    <property type="evidence" value="ECO:0007669"/>
    <property type="project" value="UniProtKB-UniRule"/>
</dbReference>
<dbReference type="GO" id="GO:0006275">
    <property type="term" value="P:regulation of DNA replication"/>
    <property type="evidence" value="ECO:0007669"/>
    <property type="project" value="UniProtKB-UniRule"/>
</dbReference>
<dbReference type="GO" id="GO:0039693">
    <property type="term" value="P:viral DNA genome replication"/>
    <property type="evidence" value="ECO:0007669"/>
    <property type="project" value="UniProtKB-UniRule"/>
</dbReference>
<dbReference type="Gene3D" id="3.30.70.330">
    <property type="match status" value="1"/>
</dbReference>
<dbReference type="Gene3D" id="1.10.287.30">
    <property type="entry name" value="E2 (early) protein, N terminal domain, subdomain 1"/>
    <property type="match status" value="1"/>
</dbReference>
<dbReference type="Gene3D" id="2.170.200.10">
    <property type="entry name" value="Papillomavirus E2 early protein domain"/>
    <property type="match status" value="1"/>
</dbReference>
<dbReference type="HAMAP" id="MF_04001">
    <property type="entry name" value="PPV_E2"/>
    <property type="match status" value="1"/>
</dbReference>
<dbReference type="InterPro" id="IPR035975">
    <property type="entry name" value="E2/EBNA1_C_sf"/>
</dbReference>
<dbReference type="InterPro" id="IPR012677">
    <property type="entry name" value="Nucleotide-bd_a/b_plait_sf"/>
</dbReference>
<dbReference type="InterPro" id="IPR000427">
    <property type="entry name" value="Papillomavirus_E2_C"/>
</dbReference>
<dbReference type="InterPro" id="IPR001866">
    <property type="entry name" value="PPV_E2_N"/>
</dbReference>
<dbReference type="InterPro" id="IPR033668">
    <property type="entry name" value="Reg_prot_E2"/>
</dbReference>
<dbReference type="InterPro" id="IPR036050">
    <property type="entry name" value="Regulatory_protein_E2_N"/>
</dbReference>
<dbReference type="InterPro" id="IPR042503">
    <property type="entry name" value="Regulatory_protein_E2_N_1"/>
</dbReference>
<dbReference type="InterPro" id="IPR042504">
    <property type="entry name" value="Regulatory_protein_E2_N_2"/>
</dbReference>
<dbReference type="Pfam" id="PF00511">
    <property type="entry name" value="PPV_E2_C"/>
    <property type="match status" value="1"/>
</dbReference>
<dbReference type="Pfam" id="PF00508">
    <property type="entry name" value="PPV_E2_N"/>
    <property type="match status" value="1"/>
</dbReference>
<dbReference type="SUPFAM" id="SSF51332">
    <property type="entry name" value="E2 regulatory, transactivation domain"/>
    <property type="match status" value="1"/>
</dbReference>
<dbReference type="SUPFAM" id="SSF54957">
    <property type="entry name" value="Viral DNA-binding domain"/>
    <property type="match status" value="1"/>
</dbReference>
<organism>
    <name type="scientific">Human papillomavirus type 26</name>
    <dbReference type="NCBI Taxonomy" id="333762"/>
    <lineage>
        <taxon>Viruses</taxon>
        <taxon>Monodnaviria</taxon>
        <taxon>Shotokuvirae</taxon>
        <taxon>Cossaviricota</taxon>
        <taxon>Papovaviricetes</taxon>
        <taxon>Zurhausenvirales</taxon>
        <taxon>Papillomaviridae</taxon>
        <taxon>Firstpapillomavirinae</taxon>
        <taxon>Alphapapillomavirus</taxon>
        <taxon>Alphapapillomavirus 5</taxon>
    </lineage>
</organism>
<keyword id="KW-0010">Activator</keyword>
<keyword id="KW-0235">DNA replication</keyword>
<keyword id="KW-0238">DNA-binding</keyword>
<keyword id="KW-0244">Early protein</keyword>
<keyword id="KW-1048">Host nucleus</keyword>
<keyword id="KW-1017">Isopeptide bond</keyword>
<keyword id="KW-0597">Phosphoprotein</keyword>
<keyword id="KW-1185">Reference proteome</keyword>
<keyword id="KW-0678">Repressor</keyword>
<keyword id="KW-0804">Transcription</keyword>
<keyword id="KW-0805">Transcription regulation</keyword>
<keyword id="KW-0832">Ubl conjugation</keyword>
<proteinExistence type="inferred from homology"/>
<organismHost>
    <name type="scientific">Homo sapiens</name>
    <name type="common">Human</name>
    <dbReference type="NCBI Taxonomy" id="9606"/>
</organismHost>
<feature type="chain" id="PRO_0000133205" description="Regulatory protein E2">
    <location>
        <begin position="1"/>
        <end position="375"/>
    </location>
</feature>
<feature type="region of interest" description="Transactivation domain" evidence="1">
    <location>
        <begin position="1"/>
        <end position="200"/>
    </location>
</feature>
<feature type="region of interest" description="Disordered" evidence="2">
    <location>
        <begin position="264"/>
        <end position="292"/>
    </location>
</feature>
<feature type="region of interest" description="DNA-binding domain" evidence="1">
    <location>
        <begin position="296"/>
        <end position="375"/>
    </location>
</feature>
<feature type="compositionally biased region" description="Polar residues" evidence="2">
    <location>
        <begin position="266"/>
        <end position="283"/>
    </location>
</feature>
<feature type="cross-link" description="Glycyl lysine isopeptide (Lys-Gly) (interchain with G-Cter in SUMO)" evidence="1">
    <location>
        <position position="303"/>
    </location>
</feature>